<evidence type="ECO:0000255" key="1">
    <source>
        <dbReference type="HAMAP-Rule" id="MF_00936"/>
    </source>
</evidence>
<evidence type="ECO:0000255" key="2">
    <source>
        <dbReference type="PROSITE-ProRule" id="PRU01384"/>
    </source>
</evidence>
<dbReference type="EC" id="5.6.2.2" evidence="1"/>
<dbReference type="EMBL" id="CP000087">
    <property type="protein sequence ID" value="ABE05386.1"/>
    <property type="molecule type" value="Genomic_DNA"/>
</dbReference>
<dbReference type="RefSeq" id="WP_011477956.1">
    <property type="nucleotide sequence ID" value="NC_007940.1"/>
</dbReference>
<dbReference type="SMR" id="Q1RGX8"/>
<dbReference type="KEGG" id="rbe:RBE_1305"/>
<dbReference type="eggNOG" id="COG0188">
    <property type="taxonomic scope" value="Bacteria"/>
</dbReference>
<dbReference type="HOGENOM" id="CLU_002977_4_1_5"/>
<dbReference type="OrthoDB" id="9806486at2"/>
<dbReference type="Proteomes" id="UP000001951">
    <property type="component" value="Chromosome"/>
</dbReference>
<dbReference type="GO" id="GO:0005694">
    <property type="term" value="C:chromosome"/>
    <property type="evidence" value="ECO:0007669"/>
    <property type="project" value="InterPro"/>
</dbReference>
<dbReference type="GO" id="GO:0005737">
    <property type="term" value="C:cytoplasm"/>
    <property type="evidence" value="ECO:0007669"/>
    <property type="project" value="TreeGrafter"/>
</dbReference>
<dbReference type="GO" id="GO:0009330">
    <property type="term" value="C:DNA topoisomerase type II (double strand cut, ATP-hydrolyzing) complex"/>
    <property type="evidence" value="ECO:0007669"/>
    <property type="project" value="TreeGrafter"/>
</dbReference>
<dbReference type="GO" id="GO:0019897">
    <property type="term" value="C:extrinsic component of plasma membrane"/>
    <property type="evidence" value="ECO:0007669"/>
    <property type="project" value="UniProtKB-UniRule"/>
</dbReference>
<dbReference type="GO" id="GO:0005524">
    <property type="term" value="F:ATP binding"/>
    <property type="evidence" value="ECO:0007669"/>
    <property type="project" value="InterPro"/>
</dbReference>
<dbReference type="GO" id="GO:0003677">
    <property type="term" value="F:DNA binding"/>
    <property type="evidence" value="ECO:0007669"/>
    <property type="project" value="UniProtKB-UniRule"/>
</dbReference>
<dbReference type="GO" id="GO:0003918">
    <property type="term" value="F:DNA topoisomerase type II (double strand cut, ATP-hydrolyzing) activity"/>
    <property type="evidence" value="ECO:0007669"/>
    <property type="project" value="UniProtKB-UniRule"/>
</dbReference>
<dbReference type="GO" id="GO:0007059">
    <property type="term" value="P:chromosome segregation"/>
    <property type="evidence" value="ECO:0007669"/>
    <property type="project" value="UniProtKB-UniRule"/>
</dbReference>
<dbReference type="GO" id="GO:0006265">
    <property type="term" value="P:DNA topological change"/>
    <property type="evidence" value="ECO:0007669"/>
    <property type="project" value="UniProtKB-UniRule"/>
</dbReference>
<dbReference type="CDD" id="cd00187">
    <property type="entry name" value="TOP4c"/>
    <property type="match status" value="1"/>
</dbReference>
<dbReference type="FunFam" id="1.10.268.10:FF:000001">
    <property type="entry name" value="DNA gyrase subunit A"/>
    <property type="match status" value="1"/>
</dbReference>
<dbReference type="FunFam" id="3.90.199.10:FF:000001">
    <property type="entry name" value="DNA gyrase subunit A"/>
    <property type="match status" value="1"/>
</dbReference>
<dbReference type="Gene3D" id="3.30.1360.40">
    <property type="match status" value="1"/>
</dbReference>
<dbReference type="Gene3D" id="2.120.10.90">
    <property type="entry name" value="DNA gyrase/topoisomerase IV, subunit A, C-terminal"/>
    <property type="match status" value="1"/>
</dbReference>
<dbReference type="Gene3D" id="3.90.199.10">
    <property type="entry name" value="Topoisomerase II, domain 5"/>
    <property type="match status" value="1"/>
</dbReference>
<dbReference type="Gene3D" id="1.10.268.10">
    <property type="entry name" value="Topoisomerase, domain 3"/>
    <property type="match status" value="1"/>
</dbReference>
<dbReference type="HAMAP" id="MF_00936">
    <property type="entry name" value="ParC_type1"/>
    <property type="match status" value="1"/>
</dbReference>
<dbReference type="InterPro" id="IPR006691">
    <property type="entry name" value="GyrA/parC_rep"/>
</dbReference>
<dbReference type="InterPro" id="IPR035516">
    <property type="entry name" value="Gyrase/topoIV_suA_C"/>
</dbReference>
<dbReference type="InterPro" id="IPR013760">
    <property type="entry name" value="Topo_IIA-like_dom_sf"/>
</dbReference>
<dbReference type="InterPro" id="IPR013758">
    <property type="entry name" value="Topo_IIA_A/C_ab"/>
</dbReference>
<dbReference type="InterPro" id="IPR013757">
    <property type="entry name" value="Topo_IIA_A_a_sf"/>
</dbReference>
<dbReference type="InterPro" id="IPR002205">
    <property type="entry name" value="Topo_IIA_dom_A"/>
</dbReference>
<dbReference type="InterPro" id="IPR005742">
    <property type="entry name" value="TopoIV_A_Gneg"/>
</dbReference>
<dbReference type="InterPro" id="IPR050220">
    <property type="entry name" value="Type_II_DNA_Topoisomerases"/>
</dbReference>
<dbReference type="NCBIfam" id="TIGR01062">
    <property type="entry name" value="parC_Gneg"/>
    <property type="match status" value="1"/>
</dbReference>
<dbReference type="NCBIfam" id="NF004044">
    <property type="entry name" value="PRK05561.1"/>
    <property type="match status" value="1"/>
</dbReference>
<dbReference type="PANTHER" id="PTHR43493">
    <property type="entry name" value="DNA GYRASE/TOPOISOMERASE SUBUNIT A"/>
    <property type="match status" value="1"/>
</dbReference>
<dbReference type="PANTHER" id="PTHR43493:SF1">
    <property type="entry name" value="DNA TOPOISOMERASE 4 SUBUNIT A"/>
    <property type="match status" value="1"/>
</dbReference>
<dbReference type="Pfam" id="PF03989">
    <property type="entry name" value="DNA_gyraseA_C"/>
    <property type="match status" value="2"/>
</dbReference>
<dbReference type="Pfam" id="PF00521">
    <property type="entry name" value="DNA_topoisoIV"/>
    <property type="match status" value="1"/>
</dbReference>
<dbReference type="SMART" id="SM00434">
    <property type="entry name" value="TOP4c"/>
    <property type="match status" value="1"/>
</dbReference>
<dbReference type="SUPFAM" id="SSF101904">
    <property type="entry name" value="GyrA/ParC C-terminal domain-like"/>
    <property type="match status" value="1"/>
</dbReference>
<dbReference type="SUPFAM" id="SSF56719">
    <property type="entry name" value="Type II DNA topoisomerase"/>
    <property type="match status" value="1"/>
</dbReference>
<dbReference type="PROSITE" id="PS52040">
    <property type="entry name" value="TOPO_IIA"/>
    <property type="match status" value="1"/>
</dbReference>
<accession>Q1RGX8</accession>
<proteinExistence type="inferred from homology"/>
<keyword id="KW-1003">Cell membrane</keyword>
<keyword id="KW-0238">DNA-binding</keyword>
<keyword id="KW-0413">Isomerase</keyword>
<keyword id="KW-0472">Membrane</keyword>
<keyword id="KW-0799">Topoisomerase</keyword>
<sequence length="736" mass="82955">MKEAKIENIDFGSALSERYLAYALSTIMSRSLPDVRDGLKPVHRRLLYAMLQLRLEPNSGYKKCARVVGDVIGKYHPHGDVAVYDTLVRLAQHFSLRYPLIDGQGNFGSIDGDNAAAMRYTESRMTEICTLLMEDIDKDTVDFRSTYDDSDLEPVIMPASFPNLLANGSEGIAVGMATNIPPHNLHELCDALMHLIDHPKAEISDIMNFIKGPDFPTGGIIIDKSDVITSAYMTGRGSFRVRARWEKEELNYGVYQIVVTEIPYQVQKSKLIEQIAILLKDKKIPLVSNIRDESTDIIRLVIEPRDRSCDPQIVMESLFKLTNLESRIQLNMNVIGSNNVPKVMNILEVLQEFLSHRQNIITRRSTYLLNKIKHRLEILEGLRIAYLNLDEIIKIIREEDEPKAIMMQRFQLTEIQVEAILNTRLRSLRKLEEQEIITEHSNLQKQQAILEEILNNPKELWKVVKKEIKAVQAKFGLNTTIGARRTSFEQVTLTNQVVDITAFITKEPITIICSKMGWVRSLKGHNNDLSSIKYKEGDAEKFILEAYTTDKILIISSEGRFFTLLADNISKGKGTGESIKLLVDIGNNDITEILVYKPDHLLLLASSIGKGFVVNSNEVMAQTKSGKQIMNVPDGHTCIACLPVNGDSVACIGESRKLLVFNIDEIPEMKKGQGVTLQKFKNAKLLDIKIFNREDGLSWNSGGKVKLEKNIIAFLGKRGSTGKLPPMGFPKNNRFS</sequence>
<name>PARC_RICBR</name>
<gene>
    <name evidence="1" type="primary">parC</name>
    <name type="ordered locus">RBE_1305</name>
</gene>
<feature type="chain" id="PRO_0000273113" description="DNA topoisomerase 4 subunit A">
    <location>
        <begin position="1"/>
        <end position="736"/>
    </location>
</feature>
<feature type="domain" description="Topo IIA-type catalytic" evidence="2">
    <location>
        <begin position="32"/>
        <end position="496"/>
    </location>
</feature>
<feature type="active site" description="O-(5'-phospho-DNA)-tyrosine intermediate" evidence="1">
    <location>
        <position position="120"/>
    </location>
</feature>
<feature type="site" description="Interaction with DNA" evidence="1">
    <location>
        <position position="40"/>
    </location>
</feature>
<feature type="site" description="Interaction with DNA" evidence="1">
    <location>
        <position position="76"/>
    </location>
</feature>
<feature type="site" description="Interaction with DNA" evidence="1">
    <location>
        <position position="78"/>
    </location>
</feature>
<feature type="site" description="Transition state stabilizer" evidence="1">
    <location>
        <position position="119"/>
    </location>
</feature>
<comment type="function">
    <text evidence="1">Topoisomerase IV is essential for chromosome segregation. It relaxes supercoiled DNA. Performs the decatenation events required during the replication of a circular DNA molecule.</text>
</comment>
<comment type="catalytic activity">
    <reaction evidence="1">
        <text>ATP-dependent breakage, passage and rejoining of double-stranded DNA.</text>
        <dbReference type="EC" id="5.6.2.2"/>
    </reaction>
</comment>
<comment type="subunit">
    <text evidence="1">Heterotetramer composed of ParC and ParE.</text>
</comment>
<comment type="subcellular location">
    <subcellularLocation>
        <location evidence="1">Cell membrane</location>
        <topology evidence="1">Peripheral membrane protein</topology>
    </subcellularLocation>
</comment>
<comment type="similarity">
    <text evidence="1">Belongs to the type II topoisomerase GyrA/ParC subunit family. ParC type 1 subfamily.</text>
</comment>
<reference key="1">
    <citation type="journal article" date="2006" name="PLoS Genet.">
        <title>Genome sequence of Rickettsia bellii illuminates the role of amoebae in gene exchanges between intracellular pathogens.</title>
        <authorList>
            <person name="Ogata H."/>
            <person name="La Scola B."/>
            <person name="Audic S."/>
            <person name="Renesto P."/>
            <person name="Blanc G."/>
            <person name="Robert C."/>
            <person name="Fournier P.-E."/>
            <person name="Claverie J.-M."/>
            <person name="Raoult D."/>
        </authorList>
    </citation>
    <scope>NUCLEOTIDE SEQUENCE [LARGE SCALE GENOMIC DNA]</scope>
    <source>
        <strain>RML369-C</strain>
    </source>
</reference>
<protein>
    <recommendedName>
        <fullName evidence="1">DNA topoisomerase 4 subunit A</fullName>
        <ecNumber evidence="1">5.6.2.2</ecNumber>
    </recommendedName>
    <alternativeName>
        <fullName evidence="1">Topoisomerase IV subunit A</fullName>
    </alternativeName>
</protein>
<organism>
    <name type="scientific">Rickettsia bellii (strain RML369-C)</name>
    <dbReference type="NCBI Taxonomy" id="336407"/>
    <lineage>
        <taxon>Bacteria</taxon>
        <taxon>Pseudomonadati</taxon>
        <taxon>Pseudomonadota</taxon>
        <taxon>Alphaproteobacteria</taxon>
        <taxon>Rickettsiales</taxon>
        <taxon>Rickettsiaceae</taxon>
        <taxon>Rickettsieae</taxon>
        <taxon>Rickettsia</taxon>
        <taxon>belli group</taxon>
    </lineage>
</organism>